<proteinExistence type="inferred from homology"/>
<comment type="function">
    <text evidence="1">Acts as a global negative controlling element, employing Fe(2+) as a cofactor to bind the operator of the repressed genes.</text>
</comment>
<comment type="subunit">
    <text evidence="1">Homodimer.</text>
</comment>
<comment type="subcellular location">
    <subcellularLocation>
        <location evidence="1">Cytoplasm</location>
    </subcellularLocation>
</comment>
<comment type="similarity">
    <text evidence="2">Belongs to the Fur family.</text>
</comment>
<name>FUR_STAAM</name>
<protein>
    <recommendedName>
        <fullName>Ferric uptake regulation protein</fullName>
        <shortName>Ferric uptake regulator</shortName>
    </recommendedName>
</protein>
<dbReference type="EMBL" id="BA000017">
    <property type="protein sequence ID" value="BAB57716.1"/>
    <property type="molecule type" value="Genomic_DNA"/>
</dbReference>
<dbReference type="RefSeq" id="WP_001095260.1">
    <property type="nucleotide sequence ID" value="NC_002758.2"/>
</dbReference>
<dbReference type="SMR" id="P0A032"/>
<dbReference type="KEGG" id="sav:SAV1554"/>
<dbReference type="HOGENOM" id="CLU_096072_5_1_9"/>
<dbReference type="PhylomeDB" id="P0A032"/>
<dbReference type="Proteomes" id="UP000002481">
    <property type="component" value="Chromosome"/>
</dbReference>
<dbReference type="GO" id="GO:0005737">
    <property type="term" value="C:cytoplasm"/>
    <property type="evidence" value="ECO:0007669"/>
    <property type="project" value="UniProtKB-SubCell"/>
</dbReference>
<dbReference type="GO" id="GO:0003700">
    <property type="term" value="F:DNA-binding transcription factor activity"/>
    <property type="evidence" value="ECO:0007669"/>
    <property type="project" value="InterPro"/>
</dbReference>
<dbReference type="GO" id="GO:0000976">
    <property type="term" value="F:transcription cis-regulatory region binding"/>
    <property type="evidence" value="ECO:0007669"/>
    <property type="project" value="TreeGrafter"/>
</dbReference>
<dbReference type="GO" id="GO:0008270">
    <property type="term" value="F:zinc ion binding"/>
    <property type="evidence" value="ECO:0007669"/>
    <property type="project" value="TreeGrafter"/>
</dbReference>
<dbReference type="GO" id="GO:0045892">
    <property type="term" value="P:negative regulation of DNA-templated transcription"/>
    <property type="evidence" value="ECO:0007669"/>
    <property type="project" value="TreeGrafter"/>
</dbReference>
<dbReference type="GO" id="GO:1900376">
    <property type="term" value="P:regulation of secondary metabolite biosynthetic process"/>
    <property type="evidence" value="ECO:0007669"/>
    <property type="project" value="TreeGrafter"/>
</dbReference>
<dbReference type="CDD" id="cd07153">
    <property type="entry name" value="Fur_like"/>
    <property type="match status" value="1"/>
</dbReference>
<dbReference type="Gene3D" id="3.30.1490.190">
    <property type="match status" value="1"/>
</dbReference>
<dbReference type="Gene3D" id="1.10.10.10">
    <property type="entry name" value="Winged helix-like DNA-binding domain superfamily/Winged helix DNA-binding domain"/>
    <property type="match status" value="1"/>
</dbReference>
<dbReference type="InterPro" id="IPR002481">
    <property type="entry name" value="FUR"/>
</dbReference>
<dbReference type="InterPro" id="IPR043135">
    <property type="entry name" value="Fur_C"/>
</dbReference>
<dbReference type="InterPro" id="IPR036388">
    <property type="entry name" value="WH-like_DNA-bd_sf"/>
</dbReference>
<dbReference type="InterPro" id="IPR036390">
    <property type="entry name" value="WH_DNA-bd_sf"/>
</dbReference>
<dbReference type="PANTHER" id="PTHR33202:SF1">
    <property type="entry name" value="FERRIC UPTAKE REGULATION PROTEIN"/>
    <property type="match status" value="1"/>
</dbReference>
<dbReference type="PANTHER" id="PTHR33202">
    <property type="entry name" value="ZINC UPTAKE REGULATION PROTEIN"/>
    <property type="match status" value="1"/>
</dbReference>
<dbReference type="Pfam" id="PF01475">
    <property type="entry name" value="FUR"/>
    <property type="match status" value="1"/>
</dbReference>
<dbReference type="SUPFAM" id="SSF46785">
    <property type="entry name" value="Winged helix' DNA-binding domain"/>
    <property type="match status" value="1"/>
</dbReference>
<evidence type="ECO:0000250" key="1"/>
<evidence type="ECO:0000305" key="2"/>
<reference key="1">
    <citation type="journal article" date="2001" name="Lancet">
        <title>Whole genome sequencing of meticillin-resistant Staphylococcus aureus.</title>
        <authorList>
            <person name="Kuroda M."/>
            <person name="Ohta T."/>
            <person name="Uchiyama I."/>
            <person name="Baba T."/>
            <person name="Yuzawa H."/>
            <person name="Kobayashi I."/>
            <person name="Cui L."/>
            <person name="Oguchi A."/>
            <person name="Aoki K."/>
            <person name="Nagai Y."/>
            <person name="Lian J.-Q."/>
            <person name="Ito T."/>
            <person name="Kanamori M."/>
            <person name="Matsumaru H."/>
            <person name="Maruyama A."/>
            <person name="Murakami H."/>
            <person name="Hosoyama A."/>
            <person name="Mizutani-Ui Y."/>
            <person name="Takahashi N.K."/>
            <person name="Sawano T."/>
            <person name="Inoue R."/>
            <person name="Kaito C."/>
            <person name="Sekimizu K."/>
            <person name="Hirakawa H."/>
            <person name="Kuhara S."/>
            <person name="Goto S."/>
            <person name="Yabuzaki J."/>
            <person name="Kanehisa M."/>
            <person name="Yamashita A."/>
            <person name="Oshima K."/>
            <person name="Furuya K."/>
            <person name="Yoshino C."/>
            <person name="Shiba T."/>
            <person name="Hattori M."/>
            <person name="Ogasawara N."/>
            <person name="Hayashi H."/>
            <person name="Hiramatsu K."/>
        </authorList>
    </citation>
    <scope>NUCLEOTIDE SEQUENCE [LARGE SCALE GENOMIC DNA]</scope>
    <source>
        <strain>Mu50 / ATCC 700699</strain>
    </source>
</reference>
<keyword id="KW-0963">Cytoplasm</keyword>
<keyword id="KW-0238">DNA-binding</keyword>
<keyword id="KW-0408">Iron</keyword>
<keyword id="KW-0479">Metal-binding</keyword>
<keyword id="KW-0678">Repressor</keyword>
<keyword id="KW-0804">Transcription</keyword>
<keyword id="KW-0805">Transcription regulation</keyword>
<keyword id="KW-0862">Zinc</keyword>
<accession>P0A032</accession>
<accession>Q9R3G5</accession>
<sequence>MNTNDAIKILKENGLKYTDKRKDMLDIFVEEDKYINAKYIQQVMDENYPGISFDTIYRNLHLFKDLGIIENTELDGEMKFRIACTNHHHHHFICEKCGDTKVIDYCPIDQIKLSLPGVNIHKHKLEVYGVCESCQD</sequence>
<feature type="chain" id="PRO_0000095573" description="Ferric uptake regulation protein">
    <location>
        <begin position="1"/>
        <end position="136"/>
    </location>
</feature>
<feature type="region of interest" description="DNA-binding" evidence="1">
    <location>
        <begin position="1"/>
        <end position="85"/>
    </location>
</feature>
<feature type="region of interest" description="Dimerization" evidence="1">
    <location>
        <begin position="86"/>
        <end position="136"/>
    </location>
</feature>
<feature type="binding site" evidence="1">
    <location>
        <position position="88"/>
    </location>
    <ligand>
        <name>Fe cation</name>
        <dbReference type="ChEBI" id="CHEBI:24875"/>
    </ligand>
</feature>
<feature type="binding site" evidence="1">
    <location>
        <position position="90"/>
    </location>
    <ligand>
        <name>Fe cation</name>
        <dbReference type="ChEBI" id="CHEBI:24875"/>
    </ligand>
</feature>
<feature type="binding site" evidence="1">
    <location>
        <position position="94"/>
    </location>
    <ligand>
        <name>Zn(2+)</name>
        <dbReference type="ChEBI" id="CHEBI:29105"/>
    </ligand>
</feature>
<feature type="binding site" evidence="1">
    <location>
        <position position="97"/>
    </location>
    <ligand>
        <name>Zn(2+)</name>
        <dbReference type="ChEBI" id="CHEBI:29105"/>
    </ligand>
</feature>
<feature type="binding site" evidence="1">
    <location>
        <position position="109"/>
    </location>
    <ligand>
        <name>Fe cation</name>
        <dbReference type="ChEBI" id="CHEBI:24875"/>
    </ligand>
</feature>
<feature type="binding site" evidence="1">
    <location>
        <position position="123"/>
    </location>
    <ligand>
        <name>Fe cation</name>
        <dbReference type="ChEBI" id="CHEBI:24875"/>
    </ligand>
</feature>
<organism>
    <name type="scientific">Staphylococcus aureus (strain Mu50 / ATCC 700699)</name>
    <dbReference type="NCBI Taxonomy" id="158878"/>
    <lineage>
        <taxon>Bacteria</taxon>
        <taxon>Bacillati</taxon>
        <taxon>Bacillota</taxon>
        <taxon>Bacilli</taxon>
        <taxon>Bacillales</taxon>
        <taxon>Staphylococcaceae</taxon>
        <taxon>Staphylococcus</taxon>
    </lineage>
</organism>
<gene>
    <name type="primary">fur</name>
    <name type="synonym">furA</name>
    <name type="synonym">mreR</name>
    <name type="ordered locus">SAV1554</name>
</gene>